<comment type="function">
    <text evidence="1">Catalyzes the specific phosphorylation of 1,6-anhydro-N-acetylmuramic acid (anhMurNAc) with the simultaneous cleavage of the 1,6-anhydro ring, generating MurNAc-6-P. Is required for the utilization of anhMurNAc either imported from the medium or derived from its own cell wall murein, and thus plays a role in cell wall recycling.</text>
</comment>
<comment type="catalytic activity">
    <reaction evidence="1">
        <text>1,6-anhydro-N-acetyl-beta-muramate + ATP + H2O = N-acetyl-D-muramate 6-phosphate + ADP + H(+)</text>
        <dbReference type="Rhea" id="RHEA:24952"/>
        <dbReference type="ChEBI" id="CHEBI:15377"/>
        <dbReference type="ChEBI" id="CHEBI:15378"/>
        <dbReference type="ChEBI" id="CHEBI:30616"/>
        <dbReference type="ChEBI" id="CHEBI:58690"/>
        <dbReference type="ChEBI" id="CHEBI:58722"/>
        <dbReference type="ChEBI" id="CHEBI:456216"/>
        <dbReference type="EC" id="2.7.1.170"/>
    </reaction>
</comment>
<comment type="pathway">
    <text evidence="1">Amino-sugar metabolism; 1,6-anhydro-N-acetylmuramate degradation.</text>
</comment>
<comment type="pathway">
    <text evidence="1">Cell wall biogenesis; peptidoglycan recycling.</text>
</comment>
<comment type="similarity">
    <text evidence="1">Belongs to the anhydro-N-acetylmuramic acid kinase family.</text>
</comment>
<proteinExistence type="inferred from homology"/>
<accession>C0Q5T6</accession>
<organism>
    <name type="scientific">Salmonella paratyphi C (strain RKS4594)</name>
    <dbReference type="NCBI Taxonomy" id="476213"/>
    <lineage>
        <taxon>Bacteria</taxon>
        <taxon>Pseudomonadati</taxon>
        <taxon>Pseudomonadota</taxon>
        <taxon>Gammaproteobacteria</taxon>
        <taxon>Enterobacterales</taxon>
        <taxon>Enterobacteriaceae</taxon>
        <taxon>Salmonella</taxon>
    </lineage>
</organism>
<name>ANMK_SALPC</name>
<gene>
    <name evidence="1" type="primary">anmK</name>
    <name type="ordered locus">SPC_2285</name>
</gene>
<protein>
    <recommendedName>
        <fullName evidence="1">Anhydro-N-acetylmuramic acid kinase</fullName>
        <ecNumber evidence="1">2.7.1.170</ecNumber>
    </recommendedName>
    <alternativeName>
        <fullName evidence="1">AnhMurNAc kinase</fullName>
    </alternativeName>
</protein>
<feature type="chain" id="PRO_1000165169" description="Anhydro-N-acetylmuramic acid kinase">
    <location>
        <begin position="1"/>
        <end position="373"/>
    </location>
</feature>
<feature type="binding site" evidence="1">
    <location>
        <begin position="12"/>
        <end position="19"/>
    </location>
    <ligand>
        <name>ATP</name>
        <dbReference type="ChEBI" id="CHEBI:30616"/>
    </ligand>
</feature>
<dbReference type="EC" id="2.7.1.170" evidence="1"/>
<dbReference type="EMBL" id="CP000857">
    <property type="protein sequence ID" value="ACN46402.1"/>
    <property type="molecule type" value="Genomic_DNA"/>
</dbReference>
<dbReference type="RefSeq" id="WP_000835021.1">
    <property type="nucleotide sequence ID" value="NC_012125.1"/>
</dbReference>
<dbReference type="SMR" id="C0Q5T6"/>
<dbReference type="KEGG" id="sei:SPC_2285"/>
<dbReference type="HOGENOM" id="CLU_038782_0_0_6"/>
<dbReference type="UniPathway" id="UPA00343"/>
<dbReference type="UniPathway" id="UPA00544"/>
<dbReference type="Proteomes" id="UP000001599">
    <property type="component" value="Chromosome"/>
</dbReference>
<dbReference type="GO" id="GO:0005524">
    <property type="term" value="F:ATP binding"/>
    <property type="evidence" value="ECO:0007669"/>
    <property type="project" value="UniProtKB-UniRule"/>
</dbReference>
<dbReference type="GO" id="GO:0016301">
    <property type="term" value="F:kinase activity"/>
    <property type="evidence" value="ECO:0007669"/>
    <property type="project" value="UniProtKB-KW"/>
</dbReference>
<dbReference type="GO" id="GO:0016773">
    <property type="term" value="F:phosphotransferase activity, alcohol group as acceptor"/>
    <property type="evidence" value="ECO:0007669"/>
    <property type="project" value="UniProtKB-UniRule"/>
</dbReference>
<dbReference type="GO" id="GO:0097175">
    <property type="term" value="P:1,6-anhydro-N-acetyl-beta-muramic acid catabolic process"/>
    <property type="evidence" value="ECO:0007669"/>
    <property type="project" value="UniProtKB-UniRule"/>
</dbReference>
<dbReference type="GO" id="GO:0006040">
    <property type="term" value="P:amino sugar metabolic process"/>
    <property type="evidence" value="ECO:0007669"/>
    <property type="project" value="InterPro"/>
</dbReference>
<dbReference type="GO" id="GO:0009254">
    <property type="term" value="P:peptidoglycan turnover"/>
    <property type="evidence" value="ECO:0007669"/>
    <property type="project" value="UniProtKB-UniRule"/>
</dbReference>
<dbReference type="CDD" id="cd24050">
    <property type="entry name" value="ASKHA_NBD_ANMK"/>
    <property type="match status" value="1"/>
</dbReference>
<dbReference type="Gene3D" id="3.30.420.40">
    <property type="match status" value="2"/>
</dbReference>
<dbReference type="HAMAP" id="MF_01270">
    <property type="entry name" value="AnhMurNAc_kinase"/>
    <property type="match status" value="1"/>
</dbReference>
<dbReference type="InterPro" id="IPR005338">
    <property type="entry name" value="Anhydro_N_Ac-Mur_kinase"/>
</dbReference>
<dbReference type="InterPro" id="IPR043129">
    <property type="entry name" value="ATPase_NBD"/>
</dbReference>
<dbReference type="NCBIfam" id="NF007138">
    <property type="entry name" value="PRK09585.1-1"/>
    <property type="match status" value="1"/>
</dbReference>
<dbReference type="NCBIfam" id="NF007139">
    <property type="entry name" value="PRK09585.1-3"/>
    <property type="match status" value="1"/>
</dbReference>
<dbReference type="NCBIfam" id="NF007148">
    <property type="entry name" value="PRK09585.3-2"/>
    <property type="match status" value="1"/>
</dbReference>
<dbReference type="PANTHER" id="PTHR30605">
    <property type="entry name" value="ANHYDRO-N-ACETYLMURAMIC ACID KINASE"/>
    <property type="match status" value="1"/>
</dbReference>
<dbReference type="PANTHER" id="PTHR30605:SF0">
    <property type="entry name" value="ANHYDRO-N-ACETYLMURAMIC ACID KINASE"/>
    <property type="match status" value="1"/>
</dbReference>
<dbReference type="Pfam" id="PF03702">
    <property type="entry name" value="AnmK"/>
    <property type="match status" value="1"/>
</dbReference>
<dbReference type="SUPFAM" id="SSF53067">
    <property type="entry name" value="Actin-like ATPase domain"/>
    <property type="match status" value="1"/>
</dbReference>
<reference key="1">
    <citation type="journal article" date="2009" name="PLoS ONE">
        <title>Salmonella paratyphi C: genetic divergence from Salmonella choleraesuis and pathogenic convergence with Salmonella typhi.</title>
        <authorList>
            <person name="Liu W.-Q."/>
            <person name="Feng Y."/>
            <person name="Wang Y."/>
            <person name="Zou Q.-H."/>
            <person name="Chen F."/>
            <person name="Guo J.-T."/>
            <person name="Peng Y.-H."/>
            <person name="Jin Y."/>
            <person name="Li Y.-G."/>
            <person name="Hu S.-N."/>
            <person name="Johnston R.N."/>
            <person name="Liu G.-R."/>
            <person name="Liu S.-L."/>
        </authorList>
    </citation>
    <scope>NUCLEOTIDE SEQUENCE [LARGE SCALE GENOMIC DNA]</scope>
    <source>
        <strain>RKS4594</strain>
    </source>
</reference>
<evidence type="ECO:0000255" key="1">
    <source>
        <dbReference type="HAMAP-Rule" id="MF_01270"/>
    </source>
</evidence>
<keyword id="KW-0067">ATP-binding</keyword>
<keyword id="KW-0119">Carbohydrate metabolism</keyword>
<keyword id="KW-0418">Kinase</keyword>
<keyword id="KW-0547">Nucleotide-binding</keyword>
<keyword id="KW-0808">Transferase</keyword>
<sequence>MKSGRFIGVMSGTSLDGVDVVLAAIDETMVAQQASLTWPIPVHLKKGILDICQGQPLTLSQLGQLDTQLGRLFAQAVNALLAQQRLQPRDIVAIGCHGQTVWHEPTGEAPHTLQIGDNNHIVAHTGITVVGDFRRRDIALGGQGAPLVPAFHHALLGHPTEKRMVLNIGGIANLSLLFPGQAVRGYDTGPGNMLMDAWIWRQCAQPYDKDAAWAKEGQVILPLLQKMLRDPYFAASAPKSTGREYFNYGWLERHLTAFPGADARDVQATLAELTAVSIAQQVLLNGGCERLMVCGGGSRNPLVMARLAALLPGIEVSTTDKAGISGDDMEALAFAWLAWRTLAGLPGNLPSVTGATEASVLGAIYPANPITQS</sequence>